<name>M1000_ARATH</name>
<reference key="1">
    <citation type="journal article" date="1997" name="Nat. Genet.">
        <title>The mitochondrial genome of Arabidopsis thaliana contains 57 genes in 366,924 nucleotides.</title>
        <authorList>
            <person name="Unseld M."/>
            <person name="Marienfeld J.R."/>
            <person name="Brandt P."/>
            <person name="Brennicke A."/>
        </authorList>
    </citation>
    <scope>NUCLEOTIDE SEQUENCE [LARGE SCALE GENOMIC DNA]</scope>
    <source>
        <strain>cv. C24</strain>
    </source>
</reference>
<reference key="2">
    <citation type="journal article" date="2018" name="Plant Cell">
        <title>Correction of persistent errors in Arabidopsis reference mitochondrial genomes.</title>
        <authorList>
            <person name="Sloan D.B."/>
            <person name="Wu Z."/>
            <person name="Sharbrough J."/>
        </authorList>
    </citation>
    <scope>NUCLEOTIDE SEQUENCE [LARGE SCALE GENOMIC DNA]</scope>
    <source>
        <strain>cv. Columbia</strain>
    </source>
</reference>
<reference key="3">
    <citation type="journal article" date="1999" name="Nature">
        <title>Sequence and analysis of chromosome 2 of the plant Arabidopsis thaliana.</title>
        <authorList>
            <person name="Lin X."/>
            <person name="Kaul S."/>
            <person name="Rounsley S.D."/>
            <person name="Shea T.P."/>
            <person name="Benito M.-I."/>
            <person name="Town C.D."/>
            <person name="Fujii C.Y."/>
            <person name="Mason T.M."/>
            <person name="Bowman C.L."/>
            <person name="Barnstead M.E."/>
            <person name="Feldblyum T.V."/>
            <person name="Buell C.R."/>
            <person name="Ketchum K.A."/>
            <person name="Lee J.J."/>
            <person name="Ronning C.M."/>
            <person name="Koo H.L."/>
            <person name="Moffat K.S."/>
            <person name="Cronin L.A."/>
            <person name="Shen M."/>
            <person name="Pai G."/>
            <person name="Van Aken S."/>
            <person name="Umayam L."/>
            <person name="Tallon L.J."/>
            <person name="Gill J.E."/>
            <person name="Adams M.D."/>
            <person name="Carrera A.J."/>
            <person name="Creasy T.H."/>
            <person name="Goodman H.M."/>
            <person name="Somerville C.R."/>
            <person name="Copenhaver G.P."/>
            <person name="Preuss D."/>
            <person name="Nierman W.C."/>
            <person name="White O."/>
            <person name="Eisen J.A."/>
            <person name="Salzberg S.L."/>
            <person name="Fraser C.M."/>
            <person name="Venter J.C."/>
        </authorList>
    </citation>
    <scope>NUCLEOTIDE SEQUENCE [LARGE SCALE GENOMIC DNA] (AT2G07674)</scope>
    <source>
        <strain>cv. Columbia</strain>
    </source>
</reference>
<reference key="4">
    <citation type="submission" date="2003-11" db="EMBL/GenBank/DDBJ databases">
        <title>Arabidopsis cDNA clones.</title>
        <authorList>
            <person name="Shinn P."/>
            <person name="Chen H."/>
            <person name="Cheuk R.F."/>
            <person name="Kim C.J."/>
            <person name="Ecker J.R."/>
        </authorList>
    </citation>
    <scope>NUCLEOTIDE SEQUENCE [LARGE SCALE MRNA] (AT2G07674)</scope>
    <source>
        <strain>cv. Columbia</strain>
    </source>
</reference>
<evidence type="ECO:0000305" key="1"/>
<proteinExistence type="predicted"/>
<accession>P92534</accession>
<accession>Q1ZXY0</accession>
<organism>
    <name type="scientific">Arabidopsis thaliana</name>
    <name type="common">Mouse-ear cress</name>
    <dbReference type="NCBI Taxonomy" id="3702"/>
    <lineage>
        <taxon>Eukaryota</taxon>
        <taxon>Viridiplantae</taxon>
        <taxon>Streptophyta</taxon>
        <taxon>Embryophyta</taxon>
        <taxon>Tracheophyta</taxon>
        <taxon>Spermatophyta</taxon>
        <taxon>Magnoliopsida</taxon>
        <taxon>eudicotyledons</taxon>
        <taxon>Gunneridae</taxon>
        <taxon>Pentapetalae</taxon>
        <taxon>rosids</taxon>
        <taxon>malvids</taxon>
        <taxon>Brassicales</taxon>
        <taxon>Brassicaceae</taxon>
        <taxon>Camelineae</taxon>
        <taxon>Arabidopsis</taxon>
    </lineage>
</organism>
<comment type="subcellular location">
    <subcellularLocation>
        <location evidence="1">Mitochondrion</location>
    </subcellularLocation>
</comment>
<comment type="miscellaneous">
    <text>A stretch of 270 kb of the mitochondrial genome is duplicated within the centromere of chromosome 2 resulting in the duplication of the gene. The expression of this duplicated gene (At2g07674) is demonstrated.</text>
</comment>
<comment type="sequence caution" evidence="1">
    <conflict type="erroneous gene model prediction">
        <sequence resource="EMBL-CDS" id="AAM15419"/>
    </conflict>
</comment>
<comment type="sequence caution" evidence="1">
    <conflict type="erroneous gene model prediction">
        <sequence resource="EMBL-CDS" id="AAM15514"/>
    </conflict>
</comment>
<comment type="sequence caution" evidence="1">
    <conflict type="frameshift">
        <sequence resource="EMBL-CDS" id="AAM15514"/>
    </conflict>
</comment>
<sequence length="114" mass="12882">MTQPAIGWRVGLGPSIIRGPLVGKSPWSVFMIYGRTSKKPGPSRTSFLVYKRKYSSRKAALGGTLSHKVCKPFGMGFCFFLYFSICRFFASKERENKVGCNDVRICTNFYLFSD</sequence>
<gene>
    <name type="ordered locus">AtMg01000</name>
</gene>
<dbReference type="EMBL" id="Y08501">
    <property type="protein sequence ID" value="CAA69840.1"/>
    <property type="molecule type" value="Genomic_DNA"/>
</dbReference>
<dbReference type="EMBL" id="BK010421">
    <property type="status" value="NOT_ANNOTATED_CDS"/>
    <property type="molecule type" value="Genomic_DNA"/>
</dbReference>
<dbReference type="EMBL" id="AC007143">
    <property type="protein sequence ID" value="AAM15419.1"/>
    <property type="status" value="ALT_SEQ"/>
    <property type="molecule type" value="Genomic_DNA"/>
</dbReference>
<dbReference type="EMBL" id="AC007730">
    <property type="protein sequence ID" value="AAM15514.1"/>
    <property type="status" value="ALT_SEQ"/>
    <property type="molecule type" value="Genomic_DNA"/>
</dbReference>
<dbReference type="EMBL" id="BT010728">
    <property type="status" value="NOT_ANNOTATED_CDS"/>
    <property type="molecule type" value="mRNA"/>
</dbReference>
<dbReference type="RefSeq" id="NP_085554.1">
    <property type="nucleotide sequence ID" value="NC_001284.2"/>
</dbReference>
<dbReference type="STRING" id="3702.P92534"/>
<dbReference type="PaxDb" id="3702-ATMG01000.1"/>
<dbReference type="EnsemblPlants" id="ATMG01000.1">
    <property type="protein sequence ID" value="ATMG01000.1"/>
    <property type="gene ID" value="ATMG01000"/>
</dbReference>
<dbReference type="Gramene" id="ATMG01000.1">
    <property type="protein sequence ID" value="ATMG01000.1"/>
    <property type="gene ID" value="ATMG01000"/>
</dbReference>
<dbReference type="Araport" id="ATMG01000"/>
<dbReference type="TAIR" id="ATMG01000">
    <property type="gene designation" value="ORF114"/>
</dbReference>
<dbReference type="HOGENOM" id="CLU_2124482_0_0_1"/>
<dbReference type="InParanoid" id="P92534"/>
<dbReference type="PRO" id="PR:P92534"/>
<dbReference type="Proteomes" id="UP000006548">
    <property type="component" value="Mitochondrion MT"/>
</dbReference>
<dbReference type="ExpressionAtlas" id="P92534">
    <property type="expression patterns" value="baseline"/>
</dbReference>
<dbReference type="GO" id="GO:0005739">
    <property type="term" value="C:mitochondrion"/>
    <property type="evidence" value="ECO:0007669"/>
    <property type="project" value="UniProtKB-SubCell"/>
</dbReference>
<feature type="chain" id="PRO_0000196804" description="Uncharacterized mitochondrial protein AtMg01000">
    <location>
        <begin position="1"/>
        <end position="114"/>
    </location>
</feature>
<keyword id="KW-0496">Mitochondrion</keyword>
<keyword id="KW-1185">Reference proteome</keyword>
<geneLocation type="mitochondrion"/>
<protein>
    <recommendedName>
        <fullName>Uncharacterized mitochondrial protein AtMg01000</fullName>
    </recommendedName>
    <alternativeName>
        <fullName>ORF114</fullName>
    </alternativeName>
</protein>